<evidence type="ECO:0000255" key="1"/>
<evidence type="ECO:0000305" key="2"/>
<organism>
    <name type="scientific">Bacillus subtilis (strain 168)</name>
    <dbReference type="NCBI Taxonomy" id="224308"/>
    <lineage>
        <taxon>Bacteria</taxon>
        <taxon>Bacillati</taxon>
        <taxon>Bacillota</taxon>
        <taxon>Bacilli</taxon>
        <taxon>Bacillales</taxon>
        <taxon>Bacillaceae</taxon>
        <taxon>Bacillus</taxon>
    </lineage>
</organism>
<reference key="1">
    <citation type="journal article" date="1996" name="Microbiology">
        <title>Organization of the Bacillus subtilis 168 chromosome between kdg and the attachment site of the SP beta prophage: use of long accurate PCR and yeast artificial chromosomes for sequencing.</title>
        <authorList>
            <person name="Capuano V."/>
            <person name="Galleron N."/>
            <person name="Pujic P."/>
            <person name="Sorokin A."/>
            <person name="Ehrlich S.D."/>
        </authorList>
    </citation>
    <scope>NUCLEOTIDE SEQUENCE [GENOMIC DNA]</scope>
    <source>
        <strain>168 / Marburg / ATCC 6051 / DSM 10 / JCM 1465 / NBRC 13719 / NCIMB 3610 / NRRL NRS-744 / VKM B-501</strain>
    </source>
</reference>
<reference key="2">
    <citation type="journal article" date="1997" name="Nature">
        <title>The complete genome sequence of the Gram-positive bacterium Bacillus subtilis.</title>
        <authorList>
            <person name="Kunst F."/>
            <person name="Ogasawara N."/>
            <person name="Moszer I."/>
            <person name="Albertini A.M."/>
            <person name="Alloni G."/>
            <person name="Azevedo V."/>
            <person name="Bertero M.G."/>
            <person name="Bessieres P."/>
            <person name="Bolotin A."/>
            <person name="Borchert S."/>
            <person name="Borriss R."/>
            <person name="Boursier L."/>
            <person name="Brans A."/>
            <person name="Braun M."/>
            <person name="Brignell S.C."/>
            <person name="Bron S."/>
            <person name="Brouillet S."/>
            <person name="Bruschi C.V."/>
            <person name="Caldwell B."/>
            <person name="Capuano V."/>
            <person name="Carter N.M."/>
            <person name="Choi S.-K."/>
            <person name="Codani J.-J."/>
            <person name="Connerton I.F."/>
            <person name="Cummings N.J."/>
            <person name="Daniel R.A."/>
            <person name="Denizot F."/>
            <person name="Devine K.M."/>
            <person name="Duesterhoeft A."/>
            <person name="Ehrlich S.D."/>
            <person name="Emmerson P.T."/>
            <person name="Entian K.-D."/>
            <person name="Errington J."/>
            <person name="Fabret C."/>
            <person name="Ferrari E."/>
            <person name="Foulger D."/>
            <person name="Fritz C."/>
            <person name="Fujita M."/>
            <person name="Fujita Y."/>
            <person name="Fuma S."/>
            <person name="Galizzi A."/>
            <person name="Galleron N."/>
            <person name="Ghim S.-Y."/>
            <person name="Glaser P."/>
            <person name="Goffeau A."/>
            <person name="Golightly E.J."/>
            <person name="Grandi G."/>
            <person name="Guiseppi G."/>
            <person name="Guy B.J."/>
            <person name="Haga K."/>
            <person name="Haiech J."/>
            <person name="Harwood C.R."/>
            <person name="Henaut A."/>
            <person name="Hilbert H."/>
            <person name="Holsappel S."/>
            <person name="Hosono S."/>
            <person name="Hullo M.-F."/>
            <person name="Itaya M."/>
            <person name="Jones L.-M."/>
            <person name="Joris B."/>
            <person name="Karamata D."/>
            <person name="Kasahara Y."/>
            <person name="Klaerr-Blanchard M."/>
            <person name="Klein C."/>
            <person name="Kobayashi Y."/>
            <person name="Koetter P."/>
            <person name="Koningstein G."/>
            <person name="Krogh S."/>
            <person name="Kumano M."/>
            <person name="Kurita K."/>
            <person name="Lapidus A."/>
            <person name="Lardinois S."/>
            <person name="Lauber J."/>
            <person name="Lazarevic V."/>
            <person name="Lee S.-M."/>
            <person name="Levine A."/>
            <person name="Liu H."/>
            <person name="Masuda S."/>
            <person name="Mauel C."/>
            <person name="Medigue C."/>
            <person name="Medina N."/>
            <person name="Mellado R.P."/>
            <person name="Mizuno M."/>
            <person name="Moestl D."/>
            <person name="Nakai S."/>
            <person name="Noback M."/>
            <person name="Noone D."/>
            <person name="O'Reilly M."/>
            <person name="Ogawa K."/>
            <person name="Ogiwara A."/>
            <person name="Oudega B."/>
            <person name="Park S.-H."/>
            <person name="Parro V."/>
            <person name="Pohl T.M."/>
            <person name="Portetelle D."/>
            <person name="Porwollik S."/>
            <person name="Prescott A.M."/>
            <person name="Presecan E."/>
            <person name="Pujic P."/>
            <person name="Purnelle B."/>
            <person name="Rapoport G."/>
            <person name="Rey M."/>
            <person name="Reynolds S."/>
            <person name="Rieger M."/>
            <person name="Rivolta C."/>
            <person name="Rocha E."/>
            <person name="Roche B."/>
            <person name="Rose M."/>
            <person name="Sadaie Y."/>
            <person name="Sato T."/>
            <person name="Scanlan E."/>
            <person name="Schleich S."/>
            <person name="Schroeter R."/>
            <person name="Scoffone F."/>
            <person name="Sekiguchi J."/>
            <person name="Sekowska A."/>
            <person name="Seror S.J."/>
            <person name="Serror P."/>
            <person name="Shin B.-S."/>
            <person name="Soldo B."/>
            <person name="Sorokin A."/>
            <person name="Tacconi E."/>
            <person name="Takagi T."/>
            <person name="Takahashi H."/>
            <person name="Takemaru K."/>
            <person name="Takeuchi M."/>
            <person name="Tamakoshi A."/>
            <person name="Tanaka T."/>
            <person name="Terpstra P."/>
            <person name="Tognoni A."/>
            <person name="Tosato V."/>
            <person name="Uchiyama S."/>
            <person name="Vandenbol M."/>
            <person name="Vannier F."/>
            <person name="Vassarotti A."/>
            <person name="Viari A."/>
            <person name="Wambutt R."/>
            <person name="Wedler E."/>
            <person name="Wedler H."/>
            <person name="Weitzenegger T."/>
            <person name="Winters P."/>
            <person name="Wipat A."/>
            <person name="Yamamoto H."/>
            <person name="Yamane K."/>
            <person name="Yasumoto K."/>
            <person name="Yata K."/>
            <person name="Yoshida K."/>
            <person name="Yoshikawa H.-F."/>
            <person name="Zumstein E."/>
            <person name="Yoshikawa H."/>
            <person name="Danchin A."/>
        </authorList>
    </citation>
    <scope>NUCLEOTIDE SEQUENCE [LARGE SCALE GENOMIC DNA]</scope>
    <source>
        <strain>168</strain>
    </source>
</reference>
<reference key="3">
    <citation type="journal article" date="1988" name="Gene">
        <title>Nucleotide sequence of the thymidylate synthase B and dihydrofolate reductase genes contained in one Bacillus subtilis operon.</title>
        <authorList>
            <person name="Iwakura M."/>
            <person name="Kawata M."/>
            <person name="Tsuda K."/>
            <person name="Tanaka T."/>
        </authorList>
    </citation>
    <scope>NUCLEOTIDE SEQUENCE [GENOMIC DNA] OF 152-203</scope>
    <source>
        <strain>168</strain>
    </source>
</reference>
<gene>
    <name type="primary">ypjP</name>
    <name type="ordered locus">BSU21840</name>
</gene>
<proteinExistence type="predicted"/>
<sequence length="203" mass="23663">MKLWMRKTLVVLFTIVTFGLVSPPAALMADKPSGQPSSLEQNDYTAFYDEHDLYDDESDDRRDPELLFQSYKEQLLDSAEDQSFLKFGSRIAPVIEDDYRKEILPKIENVISDYLATLQDDEAYQDVVISSMPSAGKTEKIFNVYNRTTGEDLLRFHVRRDHPPHDGYWFNFHYHTAEDGFQSHHELGSIYWDRNTPPNWMSA</sequence>
<comment type="subcellular location">
    <subcellularLocation>
        <location evidence="2">Membrane</location>
        <topology evidence="2">Single-pass membrane protein</topology>
    </subcellularLocation>
</comment>
<keyword id="KW-0472">Membrane</keyword>
<keyword id="KW-1185">Reference proteome</keyword>
<keyword id="KW-0812">Transmembrane</keyword>
<keyword id="KW-1133">Transmembrane helix</keyword>
<name>YPJP_BACSU</name>
<accession>P54172</accession>
<protein>
    <recommendedName>
        <fullName>Uncharacterized protein YpjP</fullName>
    </recommendedName>
</protein>
<dbReference type="EMBL" id="L77246">
    <property type="protein sequence ID" value="AAA96632.1"/>
    <property type="molecule type" value="Genomic_DNA"/>
</dbReference>
<dbReference type="EMBL" id="AL009126">
    <property type="protein sequence ID" value="CAB14102.1"/>
    <property type="molecule type" value="Genomic_DNA"/>
</dbReference>
<dbReference type="EMBL" id="M20012">
    <property type="status" value="NOT_ANNOTATED_CDS"/>
    <property type="molecule type" value="Genomic_DNA"/>
</dbReference>
<dbReference type="PIR" id="H69937">
    <property type="entry name" value="H69937"/>
</dbReference>
<dbReference type="RefSeq" id="NP_390067.1">
    <property type="nucleotide sequence ID" value="NC_000964.3"/>
</dbReference>
<dbReference type="RefSeq" id="WP_009967559.1">
    <property type="nucleotide sequence ID" value="NZ_OZ025638.1"/>
</dbReference>
<dbReference type="SMR" id="P54172"/>
<dbReference type="FunCoup" id="P54172">
    <property type="interactions" value="9"/>
</dbReference>
<dbReference type="STRING" id="224308.BSU21840"/>
<dbReference type="PaxDb" id="224308-BSU21840"/>
<dbReference type="DNASU" id="939089"/>
<dbReference type="EnsemblBacteria" id="CAB14102">
    <property type="protein sequence ID" value="CAB14102"/>
    <property type="gene ID" value="BSU_21840"/>
</dbReference>
<dbReference type="GeneID" id="939089"/>
<dbReference type="KEGG" id="bsu:BSU21840"/>
<dbReference type="PATRIC" id="fig|224308.179.peg.2386"/>
<dbReference type="eggNOG" id="ENOG502ZV7K">
    <property type="taxonomic scope" value="Bacteria"/>
</dbReference>
<dbReference type="InParanoid" id="P54172"/>
<dbReference type="OrthoDB" id="2435352at2"/>
<dbReference type="BioCyc" id="BSUB:BSU21840-MONOMER"/>
<dbReference type="Proteomes" id="UP000001570">
    <property type="component" value="Chromosome"/>
</dbReference>
<dbReference type="GO" id="GO:0016020">
    <property type="term" value="C:membrane"/>
    <property type="evidence" value="ECO:0007669"/>
    <property type="project" value="UniProtKB-SubCell"/>
</dbReference>
<dbReference type="InterPro" id="IPR025616">
    <property type="entry name" value="YpjP"/>
</dbReference>
<dbReference type="Pfam" id="PF14005">
    <property type="entry name" value="YpjP"/>
    <property type="match status" value="1"/>
</dbReference>
<feature type="chain" id="PRO_0000049706" description="Uncharacterized protein YpjP">
    <location>
        <begin position="1"/>
        <end position="203"/>
    </location>
</feature>
<feature type="transmembrane region" description="Helical" evidence="1">
    <location>
        <begin position="9"/>
        <end position="29"/>
    </location>
</feature>